<proteinExistence type="inferred from homology"/>
<keyword id="KW-0169">Cobalamin biosynthesis</keyword>
<keyword id="KW-0315">Glutamine amidotransferase</keyword>
<reference key="1">
    <citation type="journal article" date="2007" name="PLoS ONE">
        <title>Analysis of the neurotoxin complex genes in Clostridium botulinum A1-A4 and B1 strains: BoNT/A3, /Ba4 and /B1 clusters are located within plasmids.</title>
        <authorList>
            <person name="Smith T.J."/>
            <person name="Hill K.K."/>
            <person name="Foley B.T."/>
            <person name="Detter J.C."/>
            <person name="Munk A.C."/>
            <person name="Bruce D.C."/>
            <person name="Doggett N.A."/>
            <person name="Smith L.A."/>
            <person name="Marks J.D."/>
            <person name="Xie G."/>
            <person name="Brettin T.S."/>
        </authorList>
    </citation>
    <scope>NUCLEOTIDE SEQUENCE [LARGE SCALE GENOMIC DNA]</scope>
    <source>
        <strain>Okra / Type B1</strain>
    </source>
</reference>
<name>COBQ_CLOBK</name>
<protein>
    <recommendedName>
        <fullName evidence="1">Cobyric acid synthase</fullName>
    </recommendedName>
</protein>
<gene>
    <name evidence="1" type="primary">cobQ</name>
    <name type="ordered locus">CLD_3646</name>
</gene>
<comment type="function">
    <text evidence="1">Catalyzes amidations at positions B, D, E, and G on adenosylcobyrinic A,C-diamide. NH(2) groups are provided by glutamine, and one molecule of ATP is hydrogenolyzed for each amidation.</text>
</comment>
<comment type="pathway">
    <text evidence="1">Cofactor biosynthesis; adenosylcobalamin biosynthesis.</text>
</comment>
<comment type="similarity">
    <text evidence="1">Belongs to the CobB/CobQ family. CobQ subfamily.</text>
</comment>
<sequence>MAKIMIQGTASSVGKSLIVAALCRIFKQDGYSVCPFKSQNMSLNSYITLDGKEMGRAQVLQAYATGLEPEVYMNPILLKPTSDRKCQIIVNGKVYGNSTAMGYHNLKLKFKDMLKEHFNKLEEEFDIVVMEGAGSPAEINLRDRDIVNMGMAELVDAPVLLVGDIDKGGVFASLAGTMLLLKDGEKERVKGTIINKFRGDVEILKPGLDMLEDIVHIPCLGVVPYTRLQLEDEDGAVEFNKKAYAPIDIAVIKMPHISNFTDLDALKSEEDVSIRFITSKEEFKEPDLLIIPGSKNTIEDLLYLRQCGLEESIKEYSKDGKIIGICGGYQVLGSKIKDPHNVETDLGEIDGLNLLDMKTIFEKEKITTRVSAKLLNEEIENTVYGYEIHMGISEYSENVKPLFKIYNKNGEKVGYFDGAINEKGNVMGTYIHGVFDGVVFREKIINELRVKKGLKKKKSQIYEHMREKELDKLADIVRQSLDMEKIYSIIGMK</sequence>
<accession>B1IHC4</accession>
<dbReference type="EMBL" id="CP000939">
    <property type="protein sequence ID" value="ACA46412.1"/>
    <property type="molecule type" value="Genomic_DNA"/>
</dbReference>
<dbReference type="RefSeq" id="WP_015958067.1">
    <property type="nucleotide sequence ID" value="NC_010516.1"/>
</dbReference>
<dbReference type="SMR" id="B1IHC4"/>
<dbReference type="KEGG" id="cbb:CLD_3646"/>
<dbReference type="HOGENOM" id="CLU_019250_2_2_9"/>
<dbReference type="UniPathway" id="UPA00148"/>
<dbReference type="Proteomes" id="UP000008541">
    <property type="component" value="Chromosome"/>
</dbReference>
<dbReference type="GO" id="GO:0015420">
    <property type="term" value="F:ABC-type vitamin B12 transporter activity"/>
    <property type="evidence" value="ECO:0007669"/>
    <property type="project" value="UniProtKB-UniRule"/>
</dbReference>
<dbReference type="GO" id="GO:0003824">
    <property type="term" value="F:catalytic activity"/>
    <property type="evidence" value="ECO:0007669"/>
    <property type="project" value="InterPro"/>
</dbReference>
<dbReference type="GO" id="GO:0009236">
    <property type="term" value="P:cobalamin biosynthetic process"/>
    <property type="evidence" value="ECO:0007669"/>
    <property type="project" value="UniProtKB-UniRule"/>
</dbReference>
<dbReference type="CDD" id="cd05389">
    <property type="entry name" value="CobQ_N"/>
    <property type="match status" value="1"/>
</dbReference>
<dbReference type="CDD" id="cd01750">
    <property type="entry name" value="GATase1_CobQ"/>
    <property type="match status" value="1"/>
</dbReference>
<dbReference type="Gene3D" id="3.40.50.880">
    <property type="match status" value="1"/>
</dbReference>
<dbReference type="Gene3D" id="3.40.50.300">
    <property type="entry name" value="P-loop containing nucleotide triphosphate hydrolases"/>
    <property type="match status" value="1"/>
</dbReference>
<dbReference type="HAMAP" id="MF_00028">
    <property type="entry name" value="CobQ"/>
    <property type="match status" value="1"/>
</dbReference>
<dbReference type="InterPro" id="IPR029062">
    <property type="entry name" value="Class_I_gatase-like"/>
</dbReference>
<dbReference type="InterPro" id="IPR002586">
    <property type="entry name" value="CobQ/CobB/MinD/ParA_Nub-bd_dom"/>
</dbReference>
<dbReference type="InterPro" id="IPR033949">
    <property type="entry name" value="CobQ_GATase1"/>
</dbReference>
<dbReference type="InterPro" id="IPR047045">
    <property type="entry name" value="CobQ_N"/>
</dbReference>
<dbReference type="InterPro" id="IPR004459">
    <property type="entry name" value="CobQ_synth"/>
</dbReference>
<dbReference type="InterPro" id="IPR011698">
    <property type="entry name" value="GATase_3"/>
</dbReference>
<dbReference type="InterPro" id="IPR027417">
    <property type="entry name" value="P-loop_NTPase"/>
</dbReference>
<dbReference type="NCBIfam" id="TIGR00313">
    <property type="entry name" value="cobQ"/>
    <property type="match status" value="1"/>
</dbReference>
<dbReference type="NCBIfam" id="NF001989">
    <property type="entry name" value="PRK00784.1"/>
    <property type="match status" value="1"/>
</dbReference>
<dbReference type="PANTHER" id="PTHR21343:SF1">
    <property type="entry name" value="COBYRIC ACID SYNTHASE"/>
    <property type="match status" value="1"/>
</dbReference>
<dbReference type="PANTHER" id="PTHR21343">
    <property type="entry name" value="DETHIOBIOTIN SYNTHETASE"/>
    <property type="match status" value="1"/>
</dbReference>
<dbReference type="Pfam" id="PF01656">
    <property type="entry name" value="CbiA"/>
    <property type="match status" value="1"/>
</dbReference>
<dbReference type="Pfam" id="PF07685">
    <property type="entry name" value="GATase_3"/>
    <property type="match status" value="1"/>
</dbReference>
<dbReference type="SUPFAM" id="SSF52317">
    <property type="entry name" value="Class I glutamine amidotransferase-like"/>
    <property type="match status" value="1"/>
</dbReference>
<dbReference type="SUPFAM" id="SSF52540">
    <property type="entry name" value="P-loop containing nucleoside triphosphate hydrolases"/>
    <property type="match status" value="1"/>
</dbReference>
<dbReference type="PROSITE" id="PS51274">
    <property type="entry name" value="GATASE_COBBQ"/>
    <property type="match status" value="1"/>
</dbReference>
<feature type="chain" id="PRO_1000090225" description="Cobyric acid synthase">
    <location>
        <begin position="1"/>
        <end position="493"/>
    </location>
</feature>
<feature type="domain" description="GATase cobBQ-type" evidence="1">
    <location>
        <begin position="246"/>
        <end position="440"/>
    </location>
</feature>
<feature type="active site" description="Nucleophile" evidence="1">
    <location>
        <position position="326"/>
    </location>
</feature>
<feature type="active site" evidence="1">
    <location>
        <position position="432"/>
    </location>
</feature>
<organism>
    <name type="scientific">Clostridium botulinum (strain Okra / Type B1)</name>
    <dbReference type="NCBI Taxonomy" id="498213"/>
    <lineage>
        <taxon>Bacteria</taxon>
        <taxon>Bacillati</taxon>
        <taxon>Bacillota</taxon>
        <taxon>Clostridia</taxon>
        <taxon>Eubacteriales</taxon>
        <taxon>Clostridiaceae</taxon>
        <taxon>Clostridium</taxon>
    </lineage>
</organism>
<evidence type="ECO:0000255" key="1">
    <source>
        <dbReference type="HAMAP-Rule" id="MF_00028"/>
    </source>
</evidence>